<feature type="chain" id="PRO_0000376782" description="N-acetyldiaminopimelate deacetylase">
    <location>
        <begin position="1"/>
        <end position="376"/>
    </location>
</feature>
<feature type="active site" evidence="1">
    <location>
        <position position="69"/>
    </location>
</feature>
<feature type="active site" description="Proton acceptor" evidence="1">
    <location>
        <position position="128"/>
    </location>
</feature>
<reference key="1">
    <citation type="journal article" date="2001" name="Science">
        <title>Complete genome sequence of a virulent isolate of Streptococcus pneumoniae.</title>
        <authorList>
            <person name="Tettelin H."/>
            <person name="Nelson K.E."/>
            <person name="Paulsen I.T."/>
            <person name="Eisen J.A."/>
            <person name="Read T.D."/>
            <person name="Peterson S.N."/>
            <person name="Heidelberg J.F."/>
            <person name="DeBoy R.T."/>
            <person name="Haft D.H."/>
            <person name="Dodson R.J."/>
            <person name="Durkin A.S."/>
            <person name="Gwinn M.L."/>
            <person name="Kolonay J.F."/>
            <person name="Nelson W.C."/>
            <person name="Peterson J.D."/>
            <person name="Umayam L.A."/>
            <person name="White O."/>
            <person name="Salzberg S.L."/>
            <person name="Lewis M.R."/>
            <person name="Radune D."/>
            <person name="Holtzapple E.K."/>
            <person name="Khouri H.M."/>
            <person name="Wolf A.M."/>
            <person name="Utterback T.R."/>
            <person name="Hansen C.L."/>
            <person name="McDonald L.A."/>
            <person name="Feldblyum T.V."/>
            <person name="Angiuoli S.V."/>
            <person name="Dickinson T."/>
            <person name="Hickey E.K."/>
            <person name="Holt I.E."/>
            <person name="Loftus B.J."/>
            <person name="Yang F."/>
            <person name="Smith H.O."/>
            <person name="Venter J.C."/>
            <person name="Dougherty B.A."/>
            <person name="Morrison D.A."/>
            <person name="Hollingshead S.K."/>
            <person name="Fraser C.M."/>
        </authorList>
    </citation>
    <scope>NUCLEOTIDE SEQUENCE [LARGE SCALE GENOMIC DNA]</scope>
    <source>
        <strain>ATCC BAA-334 / TIGR4</strain>
    </source>
</reference>
<gene>
    <name type="ordered locus">SP_2096</name>
</gene>
<name>DAPEL_STRPN</name>
<protein>
    <recommendedName>
        <fullName evidence="1">N-acetyldiaminopimelate deacetylase</fullName>
        <ecNumber evidence="1">3.5.1.47</ecNumber>
    </recommendedName>
</protein>
<evidence type="ECO:0000255" key="1">
    <source>
        <dbReference type="HAMAP-Rule" id="MF_01692"/>
    </source>
</evidence>
<comment type="function">
    <text evidence="1">Catalyzes the conversion of N-acetyl-diaminopimelate to diaminopimelate and acetate.</text>
</comment>
<comment type="catalytic activity">
    <reaction evidence="1">
        <text>N-acetyl-(2S,6S)-2,6-diaminopimelate + H2O = (2S,6S)-2,6-diaminopimelate + acetate</text>
        <dbReference type="Rhea" id="RHEA:20405"/>
        <dbReference type="ChEBI" id="CHEBI:15377"/>
        <dbReference type="ChEBI" id="CHEBI:30089"/>
        <dbReference type="ChEBI" id="CHEBI:57609"/>
        <dbReference type="ChEBI" id="CHEBI:58767"/>
        <dbReference type="EC" id="3.5.1.47"/>
    </reaction>
</comment>
<comment type="pathway">
    <text evidence="1">Amino-acid biosynthesis; L-lysine biosynthesis via DAP pathway; LL-2,6-diaminopimelate from (S)-tetrahydrodipicolinate (acetylase route): step 3/3.</text>
</comment>
<comment type="similarity">
    <text evidence="1">Belongs to the peptidase M20A family. N-acetyldiaminopimelate deacetylase subfamily.</text>
</comment>
<dbReference type="EC" id="3.5.1.47" evidence="1"/>
<dbReference type="EMBL" id="AE005672">
    <property type="protein sequence ID" value="AAK76155.1"/>
    <property type="molecule type" value="Genomic_DNA"/>
</dbReference>
<dbReference type="PIR" id="B95245">
    <property type="entry name" value="B95245"/>
</dbReference>
<dbReference type="RefSeq" id="WP_000886114.1">
    <property type="nucleotide sequence ID" value="NC_003028.3"/>
</dbReference>
<dbReference type="SMR" id="Q97NE7"/>
<dbReference type="PaxDb" id="170187-SP_2096"/>
<dbReference type="EnsemblBacteria" id="AAK76155">
    <property type="protein sequence ID" value="AAK76155"/>
    <property type="gene ID" value="SP_2096"/>
</dbReference>
<dbReference type="KEGG" id="spn:SP_2096"/>
<dbReference type="eggNOG" id="COG1473">
    <property type="taxonomic scope" value="Bacteria"/>
</dbReference>
<dbReference type="PhylomeDB" id="Q97NE7"/>
<dbReference type="BioCyc" id="SPNE170187:G1FZB-2182-MONOMER"/>
<dbReference type="UniPathway" id="UPA00034">
    <property type="reaction ID" value="UER00024"/>
</dbReference>
<dbReference type="Proteomes" id="UP000000585">
    <property type="component" value="Chromosome"/>
</dbReference>
<dbReference type="GO" id="GO:0050118">
    <property type="term" value="F:N-acetyldiaminopimelate deacetylase activity"/>
    <property type="evidence" value="ECO:0007669"/>
    <property type="project" value="UniProtKB-UniRule"/>
</dbReference>
<dbReference type="GO" id="GO:0019877">
    <property type="term" value="P:diaminopimelate biosynthetic process"/>
    <property type="evidence" value="ECO:0007669"/>
    <property type="project" value="UniProtKB-UniRule"/>
</dbReference>
<dbReference type="GO" id="GO:0009089">
    <property type="term" value="P:lysine biosynthetic process via diaminopimelate"/>
    <property type="evidence" value="ECO:0007669"/>
    <property type="project" value="UniProtKB-UniRule"/>
</dbReference>
<dbReference type="CDD" id="cd05670">
    <property type="entry name" value="M20_Acy1_YkuR-like"/>
    <property type="match status" value="1"/>
</dbReference>
<dbReference type="FunFam" id="3.30.70.360:FF:000001">
    <property type="entry name" value="N-acetyldiaminopimelate deacetylase"/>
    <property type="match status" value="1"/>
</dbReference>
<dbReference type="Gene3D" id="3.30.70.360">
    <property type="match status" value="1"/>
</dbReference>
<dbReference type="Gene3D" id="3.40.630.10">
    <property type="entry name" value="Zn peptidases"/>
    <property type="match status" value="1"/>
</dbReference>
<dbReference type="HAMAP" id="MF_01692">
    <property type="entry name" value="DapEL"/>
    <property type="match status" value="1"/>
</dbReference>
<dbReference type="InterPro" id="IPR023905">
    <property type="entry name" value="AcetylDAP_deacetylase"/>
</dbReference>
<dbReference type="InterPro" id="IPR017439">
    <property type="entry name" value="Amidohydrolase"/>
</dbReference>
<dbReference type="InterPro" id="IPR036264">
    <property type="entry name" value="Bact_exopeptidase_dim_dom"/>
</dbReference>
<dbReference type="InterPro" id="IPR002933">
    <property type="entry name" value="Peptidase_M20"/>
</dbReference>
<dbReference type="InterPro" id="IPR011650">
    <property type="entry name" value="Peptidase_M20_dimer"/>
</dbReference>
<dbReference type="NCBIfam" id="TIGR01891">
    <property type="entry name" value="amidohydrolases"/>
    <property type="match status" value="1"/>
</dbReference>
<dbReference type="PANTHER" id="PTHR11014:SF98">
    <property type="entry name" value="N-ACETYLDIAMINOPIMELATE DEACETYLASE"/>
    <property type="match status" value="1"/>
</dbReference>
<dbReference type="PANTHER" id="PTHR11014">
    <property type="entry name" value="PEPTIDASE M20 FAMILY MEMBER"/>
    <property type="match status" value="1"/>
</dbReference>
<dbReference type="Pfam" id="PF07687">
    <property type="entry name" value="M20_dimer"/>
    <property type="match status" value="1"/>
</dbReference>
<dbReference type="Pfam" id="PF01546">
    <property type="entry name" value="Peptidase_M20"/>
    <property type="match status" value="1"/>
</dbReference>
<dbReference type="PIRSF" id="PIRSF005962">
    <property type="entry name" value="Pept_M20D_amidohydro"/>
    <property type="match status" value="1"/>
</dbReference>
<dbReference type="SUPFAM" id="SSF55031">
    <property type="entry name" value="Bacterial exopeptidase dimerisation domain"/>
    <property type="match status" value="1"/>
</dbReference>
<dbReference type="SUPFAM" id="SSF53187">
    <property type="entry name" value="Zn-dependent exopeptidases"/>
    <property type="match status" value="1"/>
</dbReference>
<sequence length="376" mass="41664">MLDLIQTRRDLHQIPEIGLEEFKTQAYLLDVIEKLTTGKDFVQIRTWRTGILVYLQGSQPERTIGWRTDIDGLPIVEQTGLPFASQHQGRMHACVHDFHMTIALGCLERALEEQPKNNLLFLFQPAEENEAGGMLMYEDGAFGDWLPDQFYGLHVRPDLKVGQIATNTHTLFAGTCEVKIRFKGKGGHAAFPHEANDALVAASYFVTQVQSVVSRNVNPIEGAVVTFGVFQAGTTNNVITDTAFLHGTIRALTQDMSLLVQKRVKTVAEGVAAAFDMEVEVELKQGGYLPVENNPALARELMDFFDEKDGIELIDIEPAMTGEDFGYLLSKVDGVMFWLGIDSPYALHHPQMSPKEEVLAIGVAAVSSFLKKKAAE</sequence>
<keyword id="KW-0028">Amino-acid biosynthesis</keyword>
<keyword id="KW-0220">Diaminopimelate biosynthesis</keyword>
<keyword id="KW-0378">Hydrolase</keyword>
<keyword id="KW-0457">Lysine biosynthesis</keyword>
<keyword id="KW-1185">Reference proteome</keyword>
<organism>
    <name type="scientific">Streptococcus pneumoniae serotype 4 (strain ATCC BAA-334 / TIGR4)</name>
    <dbReference type="NCBI Taxonomy" id="170187"/>
    <lineage>
        <taxon>Bacteria</taxon>
        <taxon>Bacillati</taxon>
        <taxon>Bacillota</taxon>
        <taxon>Bacilli</taxon>
        <taxon>Lactobacillales</taxon>
        <taxon>Streptococcaceae</taxon>
        <taxon>Streptococcus</taxon>
    </lineage>
</organism>
<proteinExistence type="inferred from homology"/>
<accession>Q97NE7</accession>